<feature type="chain" id="PRO_0000307534" description="Triosephosphate isomerase">
    <location>
        <begin position="1"/>
        <end position="251"/>
    </location>
</feature>
<feature type="active site" description="Electrophile" evidence="1">
    <location>
        <position position="95"/>
    </location>
</feature>
<feature type="active site" description="Proton acceptor" evidence="1">
    <location>
        <position position="167"/>
    </location>
</feature>
<feature type="binding site" evidence="1">
    <location>
        <begin position="9"/>
        <end position="11"/>
    </location>
    <ligand>
        <name>substrate</name>
    </ligand>
</feature>
<feature type="binding site" evidence="1">
    <location>
        <position position="173"/>
    </location>
    <ligand>
        <name>substrate</name>
    </ligand>
</feature>
<feature type="binding site" evidence="1">
    <location>
        <position position="212"/>
    </location>
    <ligand>
        <name>substrate</name>
    </ligand>
</feature>
<feature type="binding site" evidence="1">
    <location>
        <begin position="233"/>
        <end position="234"/>
    </location>
    <ligand>
        <name>substrate</name>
    </ligand>
</feature>
<dbReference type="EC" id="5.3.1.1" evidence="1"/>
<dbReference type="EMBL" id="CT573326">
    <property type="protein sequence ID" value="CAK13707.1"/>
    <property type="molecule type" value="Genomic_DNA"/>
</dbReference>
<dbReference type="RefSeq" id="WP_011532137.1">
    <property type="nucleotide sequence ID" value="NC_008027.1"/>
</dbReference>
<dbReference type="SMR" id="Q1IF47"/>
<dbReference type="STRING" id="384676.PSEEN0790"/>
<dbReference type="GeneID" id="32804097"/>
<dbReference type="KEGG" id="pen:PSEEN0790"/>
<dbReference type="eggNOG" id="COG0149">
    <property type="taxonomic scope" value="Bacteria"/>
</dbReference>
<dbReference type="HOGENOM" id="CLU_024251_2_3_6"/>
<dbReference type="OrthoDB" id="9809429at2"/>
<dbReference type="UniPathway" id="UPA00109">
    <property type="reaction ID" value="UER00189"/>
</dbReference>
<dbReference type="UniPathway" id="UPA00138"/>
<dbReference type="Proteomes" id="UP000000658">
    <property type="component" value="Chromosome"/>
</dbReference>
<dbReference type="GO" id="GO:0005829">
    <property type="term" value="C:cytosol"/>
    <property type="evidence" value="ECO:0007669"/>
    <property type="project" value="TreeGrafter"/>
</dbReference>
<dbReference type="GO" id="GO:0004807">
    <property type="term" value="F:triose-phosphate isomerase activity"/>
    <property type="evidence" value="ECO:0007669"/>
    <property type="project" value="UniProtKB-UniRule"/>
</dbReference>
<dbReference type="GO" id="GO:0006094">
    <property type="term" value="P:gluconeogenesis"/>
    <property type="evidence" value="ECO:0007669"/>
    <property type="project" value="UniProtKB-UniRule"/>
</dbReference>
<dbReference type="GO" id="GO:0046166">
    <property type="term" value="P:glyceraldehyde-3-phosphate biosynthetic process"/>
    <property type="evidence" value="ECO:0007669"/>
    <property type="project" value="TreeGrafter"/>
</dbReference>
<dbReference type="GO" id="GO:0019563">
    <property type="term" value="P:glycerol catabolic process"/>
    <property type="evidence" value="ECO:0007669"/>
    <property type="project" value="TreeGrafter"/>
</dbReference>
<dbReference type="GO" id="GO:0006096">
    <property type="term" value="P:glycolytic process"/>
    <property type="evidence" value="ECO:0007669"/>
    <property type="project" value="UniProtKB-UniRule"/>
</dbReference>
<dbReference type="CDD" id="cd00311">
    <property type="entry name" value="TIM"/>
    <property type="match status" value="1"/>
</dbReference>
<dbReference type="FunFam" id="3.20.20.70:FF:000016">
    <property type="entry name" value="Triosephosphate isomerase"/>
    <property type="match status" value="1"/>
</dbReference>
<dbReference type="Gene3D" id="3.20.20.70">
    <property type="entry name" value="Aldolase class I"/>
    <property type="match status" value="1"/>
</dbReference>
<dbReference type="HAMAP" id="MF_00147_B">
    <property type="entry name" value="TIM_B"/>
    <property type="match status" value="1"/>
</dbReference>
<dbReference type="InterPro" id="IPR013785">
    <property type="entry name" value="Aldolase_TIM"/>
</dbReference>
<dbReference type="InterPro" id="IPR035990">
    <property type="entry name" value="TIM_sf"/>
</dbReference>
<dbReference type="InterPro" id="IPR022896">
    <property type="entry name" value="TrioseP_Isoase_bac/euk"/>
</dbReference>
<dbReference type="InterPro" id="IPR000652">
    <property type="entry name" value="Triosephosphate_isomerase"/>
</dbReference>
<dbReference type="InterPro" id="IPR020861">
    <property type="entry name" value="Triosephosphate_isomerase_AS"/>
</dbReference>
<dbReference type="NCBIfam" id="TIGR00419">
    <property type="entry name" value="tim"/>
    <property type="match status" value="1"/>
</dbReference>
<dbReference type="PANTHER" id="PTHR21139">
    <property type="entry name" value="TRIOSEPHOSPHATE ISOMERASE"/>
    <property type="match status" value="1"/>
</dbReference>
<dbReference type="PANTHER" id="PTHR21139:SF42">
    <property type="entry name" value="TRIOSEPHOSPHATE ISOMERASE"/>
    <property type="match status" value="1"/>
</dbReference>
<dbReference type="Pfam" id="PF00121">
    <property type="entry name" value="TIM"/>
    <property type="match status" value="1"/>
</dbReference>
<dbReference type="SUPFAM" id="SSF51351">
    <property type="entry name" value="Triosephosphate isomerase (TIM)"/>
    <property type="match status" value="1"/>
</dbReference>
<dbReference type="PROSITE" id="PS00171">
    <property type="entry name" value="TIM_1"/>
    <property type="match status" value="1"/>
</dbReference>
<dbReference type="PROSITE" id="PS51440">
    <property type="entry name" value="TIM_2"/>
    <property type="match status" value="1"/>
</dbReference>
<reference key="1">
    <citation type="journal article" date="2006" name="Nat. Biotechnol.">
        <title>Complete genome sequence of the entomopathogenic and metabolically versatile soil bacterium Pseudomonas entomophila.</title>
        <authorList>
            <person name="Vodovar N."/>
            <person name="Vallenet D."/>
            <person name="Cruveiller S."/>
            <person name="Rouy Z."/>
            <person name="Barbe V."/>
            <person name="Acosta C."/>
            <person name="Cattolico L."/>
            <person name="Jubin C."/>
            <person name="Lajus A."/>
            <person name="Segurens B."/>
            <person name="Vacherie B."/>
            <person name="Wincker P."/>
            <person name="Weissenbach J."/>
            <person name="Lemaitre B."/>
            <person name="Medigue C."/>
            <person name="Boccard F."/>
        </authorList>
    </citation>
    <scope>NUCLEOTIDE SEQUENCE [LARGE SCALE GENOMIC DNA]</scope>
    <source>
        <strain>L48</strain>
    </source>
</reference>
<evidence type="ECO:0000255" key="1">
    <source>
        <dbReference type="HAMAP-Rule" id="MF_00147"/>
    </source>
</evidence>
<protein>
    <recommendedName>
        <fullName evidence="1">Triosephosphate isomerase</fullName>
        <shortName evidence="1">TIM</shortName>
        <shortName evidence="1">TPI</shortName>
        <ecNumber evidence="1">5.3.1.1</ecNumber>
    </recommendedName>
    <alternativeName>
        <fullName evidence="1">Triose-phosphate isomerase</fullName>
    </alternativeName>
</protein>
<keyword id="KW-0963">Cytoplasm</keyword>
<keyword id="KW-0312">Gluconeogenesis</keyword>
<keyword id="KW-0324">Glycolysis</keyword>
<keyword id="KW-0413">Isomerase</keyword>
<organism>
    <name type="scientific">Pseudomonas entomophila (strain L48)</name>
    <dbReference type="NCBI Taxonomy" id="384676"/>
    <lineage>
        <taxon>Bacteria</taxon>
        <taxon>Pseudomonadati</taxon>
        <taxon>Pseudomonadota</taxon>
        <taxon>Gammaproteobacteria</taxon>
        <taxon>Pseudomonadales</taxon>
        <taxon>Pseudomonadaceae</taxon>
        <taxon>Pseudomonas</taxon>
    </lineage>
</organism>
<name>TPIS_PSEE4</name>
<accession>Q1IF47</accession>
<sequence length="251" mass="25924">MRRPMVAGNWKMHGTRASVVELTQGLGNMSLPSGVEVAVFPPSLFVTQVIDGLEGKGINVGAQNSAVQPEQGALTGEVAPSQLAEVGCKYVLVGHSERRQIIGESDEVLNQKFAAAQKSGLTPVLCIGETLAEREAGETLKVVGRQLSSVIDAFGIKAFANAVIAYEPVWAIGTGLTASPQQAQDVHAAIRKQLAAMDAEVAANVQLLYGGSVKAANAAELFGMPDIDGGLIGGASLNADEFGAICRAAGN</sequence>
<proteinExistence type="inferred from homology"/>
<gene>
    <name evidence="1" type="primary">tpiA</name>
    <name type="ordered locus">PSEEN0790</name>
</gene>
<comment type="function">
    <text evidence="1">Involved in the gluconeogenesis. Catalyzes stereospecifically the conversion of dihydroxyacetone phosphate (DHAP) to D-glyceraldehyde-3-phosphate (G3P).</text>
</comment>
<comment type="catalytic activity">
    <reaction evidence="1">
        <text>D-glyceraldehyde 3-phosphate = dihydroxyacetone phosphate</text>
        <dbReference type="Rhea" id="RHEA:18585"/>
        <dbReference type="ChEBI" id="CHEBI:57642"/>
        <dbReference type="ChEBI" id="CHEBI:59776"/>
        <dbReference type="EC" id="5.3.1.1"/>
    </reaction>
</comment>
<comment type="pathway">
    <text evidence="1">Carbohydrate biosynthesis; gluconeogenesis.</text>
</comment>
<comment type="pathway">
    <text evidence="1">Carbohydrate degradation; glycolysis; D-glyceraldehyde 3-phosphate from glycerone phosphate: step 1/1.</text>
</comment>
<comment type="subunit">
    <text evidence="1">Homodimer.</text>
</comment>
<comment type="subcellular location">
    <subcellularLocation>
        <location evidence="1">Cytoplasm</location>
    </subcellularLocation>
</comment>
<comment type="similarity">
    <text evidence="1">Belongs to the triosephosphate isomerase family.</text>
</comment>